<organism>
    <name type="scientific">Pyricularia grisea</name>
    <name type="common">Crabgrass-specific blast fungus</name>
    <name type="synonym">Magnaporthe grisea</name>
    <dbReference type="NCBI Taxonomy" id="148305"/>
    <lineage>
        <taxon>Eukaryota</taxon>
        <taxon>Fungi</taxon>
        <taxon>Dikarya</taxon>
        <taxon>Ascomycota</taxon>
        <taxon>Pezizomycotina</taxon>
        <taxon>Sordariomycetes</taxon>
        <taxon>Sordariomycetidae</taxon>
        <taxon>Magnaporthales</taxon>
        <taxon>Pyriculariaceae</taxon>
        <taxon>Pyricularia</taxon>
    </lineage>
</organism>
<comment type="function">
    <text evidence="3 4 8">Trans-enoyl reductase; part of the gene cluster that mediates the biosynthesis of the mycotoxin pyrichalasin H, a tyrosine-derived cytochalasan that inhibits the growth of rice seedlings, but also inhibits lymphocyte capping and actin polymerization and alters cell morphology (Probable) (PubMed:31099577). Pyrichalasin H is indicated as the responsible agent for the genus-specific pathogenicity of M.grisea toward crabgrass (PubMed:31099577). The first step in the pathway is catalyzed by the O-methyltransferase pyiA which methylates free tyrosine to generate the precursor O-methyltyrosine (PubMed:31099577). The hybrid PKS-NRPS pyiS, assisted by the enoyl reductase pyiC, are responsible for fusion of the O-methyltyrosine precursor and the polyketide backbone (PubMed:31099577). The polyketide synthase module (PKS) of pyiS is responsible for the synthesis of the polyketide backbone and the downstream nonribosomal peptide synthetase (NRPS) amidates the carboxyl end of the polyketide with the O-methyltyrosine precursor (PubMed:31099577). As the NRPS A-domain demonstrates substrate tolerance, pyiS can also use phenylalanine, tyrosine and even para-chlorophenylalanine as amino acid precursor, which leads to the production of novel cytochalasans, including halogenated cytochalasans (PubMed:31099577). Because pyiS lacks a designated enoylreductase (ER) domain, the required activity is provided the enoyl reductase pyiC (PubMed:31099577). Reduction by the hydrolyase pyiE, followed by dehydration and intra-molecular Diels-Alder cyclization by the Diels-Alderase pyiF then yield the required isoindolone-fused macrocycle (PubMed:32039410). The tailoring cytochrome P450 monooxygenases piyD and piyG catalyze the hydroxylation at C-18 and C-7, respectivily, whereas the short-chain dehydrogenase/reductase pyiH reduces the carbonyl at C-21 in preparation for the transfer of an acetyl group by the acetyltransferase pyiB (PubMed:31099577). These 3 reactions whose order is not clear yet, lead to the production of O-methylpyrichalasin J, a deacetylated pyrichalasin H (PubMed:31099577). Finally, pyiB to converts O-methylpyrichalasin J into the final product pyrichalasin H via acetylation of C-21 (PubMed:31099577).</text>
</comment>
<comment type="pathway">
    <text evidence="3">Mycotoxin biosynthesis.</text>
</comment>
<comment type="subunit">
    <text evidence="1">Monomer.</text>
</comment>
<comment type="disruption phenotype">
    <text evidence="3">Results in the complete abolition of pyrichalasin H and deacetylated pyrichalasin H production.</text>
</comment>
<comment type="similarity">
    <text evidence="6">Belongs to the zinc-containing alcohol dehydrogenase family.</text>
</comment>
<dbReference type="EC" id="1.-.-.-" evidence="7"/>
<dbReference type="EMBL" id="MK801691">
    <property type="protein sequence ID" value="QCS37515.1"/>
    <property type="molecule type" value="Genomic_DNA"/>
</dbReference>
<dbReference type="SMR" id="A0A4P8W733"/>
<dbReference type="Proteomes" id="UP000515153">
    <property type="component" value="Unplaced"/>
</dbReference>
<dbReference type="GO" id="GO:0000166">
    <property type="term" value="F:nucleotide binding"/>
    <property type="evidence" value="ECO:0007669"/>
    <property type="project" value="UniProtKB-KW"/>
</dbReference>
<dbReference type="GO" id="GO:0016651">
    <property type="term" value="F:oxidoreductase activity, acting on NAD(P)H"/>
    <property type="evidence" value="ECO:0007669"/>
    <property type="project" value="InterPro"/>
</dbReference>
<dbReference type="CDD" id="cd08249">
    <property type="entry name" value="enoyl_reductase_like"/>
    <property type="match status" value="1"/>
</dbReference>
<dbReference type="Gene3D" id="3.90.180.10">
    <property type="entry name" value="Medium-chain alcohol dehydrogenases, catalytic domain"/>
    <property type="match status" value="1"/>
</dbReference>
<dbReference type="Gene3D" id="3.40.50.720">
    <property type="entry name" value="NAD(P)-binding Rossmann-like Domain"/>
    <property type="match status" value="1"/>
</dbReference>
<dbReference type="InterPro" id="IPR013149">
    <property type="entry name" value="ADH-like_C"/>
</dbReference>
<dbReference type="InterPro" id="IPR013154">
    <property type="entry name" value="ADH-like_N"/>
</dbReference>
<dbReference type="InterPro" id="IPR011032">
    <property type="entry name" value="GroES-like_sf"/>
</dbReference>
<dbReference type="InterPro" id="IPR036291">
    <property type="entry name" value="NAD(P)-bd_dom_sf"/>
</dbReference>
<dbReference type="InterPro" id="IPR020843">
    <property type="entry name" value="PKS_ER"/>
</dbReference>
<dbReference type="InterPro" id="IPR047122">
    <property type="entry name" value="Trans-enoyl_RdTase-like"/>
</dbReference>
<dbReference type="PANTHER" id="PTHR45348">
    <property type="entry name" value="HYPOTHETICAL OXIDOREDUCTASE (EUROFUNG)"/>
    <property type="match status" value="1"/>
</dbReference>
<dbReference type="PANTHER" id="PTHR45348:SF1">
    <property type="entry name" value="TRANS-ENOYL REDUCTASE STHE"/>
    <property type="match status" value="1"/>
</dbReference>
<dbReference type="Pfam" id="PF08240">
    <property type="entry name" value="ADH_N"/>
    <property type="match status" value="1"/>
</dbReference>
<dbReference type="Pfam" id="PF00107">
    <property type="entry name" value="ADH_zinc_N"/>
    <property type="match status" value="1"/>
</dbReference>
<dbReference type="SMART" id="SM00829">
    <property type="entry name" value="PKS_ER"/>
    <property type="match status" value="1"/>
</dbReference>
<dbReference type="SUPFAM" id="SSF50129">
    <property type="entry name" value="GroES-like"/>
    <property type="match status" value="1"/>
</dbReference>
<dbReference type="SUPFAM" id="SSF51735">
    <property type="entry name" value="NAD(P)-binding Rossmann-fold domains"/>
    <property type="match status" value="1"/>
</dbReference>
<evidence type="ECO:0000250" key="1">
    <source>
        <dbReference type="UniProtKB" id="Q9Y7D0"/>
    </source>
</evidence>
<evidence type="ECO:0000255" key="2"/>
<evidence type="ECO:0000269" key="3">
    <source>
    </source>
</evidence>
<evidence type="ECO:0000269" key="4">
    <source>
    </source>
</evidence>
<evidence type="ECO:0000303" key="5">
    <source>
    </source>
</evidence>
<evidence type="ECO:0000305" key="6"/>
<evidence type="ECO:0000305" key="7">
    <source>
    </source>
</evidence>
<evidence type="ECO:0000305" key="8">
    <source>
    </source>
</evidence>
<feature type="chain" id="PRO_0000449432" description="Trans-enoyl reductase pyiC">
    <location>
        <begin position="1"/>
        <end position="369"/>
    </location>
</feature>
<feature type="binding site" evidence="1">
    <location>
        <begin position="52"/>
        <end position="55"/>
    </location>
    <ligand>
        <name>NADP(+)</name>
        <dbReference type="ChEBI" id="CHEBI:58349"/>
    </ligand>
</feature>
<feature type="binding site" evidence="2">
    <location>
        <begin position="137"/>
        <end position="144"/>
    </location>
    <ligand>
        <name>substrate</name>
    </ligand>
</feature>
<feature type="binding site" evidence="1">
    <location>
        <begin position="195"/>
        <end position="198"/>
    </location>
    <ligand>
        <name>NADP(+)</name>
        <dbReference type="ChEBI" id="CHEBI:58349"/>
    </ligand>
</feature>
<feature type="binding site" evidence="1">
    <location>
        <position position="213"/>
    </location>
    <ligand>
        <name>NADP(+)</name>
        <dbReference type="ChEBI" id="CHEBI:58349"/>
    </ligand>
</feature>
<feature type="binding site" evidence="1">
    <location>
        <begin position="260"/>
        <end position="261"/>
    </location>
    <ligand>
        <name>NADP(+)</name>
        <dbReference type="ChEBI" id="CHEBI:58349"/>
    </ligand>
</feature>
<feature type="binding site" evidence="2">
    <location>
        <begin position="280"/>
        <end position="284"/>
    </location>
    <ligand>
        <name>substrate</name>
    </ligand>
</feature>
<feature type="binding site" evidence="1">
    <location>
        <begin position="349"/>
        <end position="350"/>
    </location>
    <ligand>
        <name>NADP(+)</name>
        <dbReference type="ChEBI" id="CHEBI:58349"/>
    </ligand>
</feature>
<protein>
    <recommendedName>
        <fullName evidence="5">Trans-enoyl reductase pyiC</fullName>
        <ecNumber evidence="7">1.-.-.-</ecNumber>
    </recommendedName>
    <alternativeName>
        <fullName evidence="5">Pyrichalasin H biosynthesis cluster protein C</fullName>
    </alternativeName>
</protein>
<gene>
    <name evidence="5" type="primary">pyiC</name>
</gene>
<sequence length="369" mass="40287">MQTSNYGSLPTSRSAVVLGNDERLRIERHLPLPALRPNEVLVQVKAVAINPCDYKMHQRFPCPGAVDGCDFAGVIVGVGPEVLKFGLGDRVCGAVHGSNPLRPESGSFTDYMTSESEFTLKIPAGLSFEQAVGMGVTGIGTLGMALFRTLQLPGSLDRPATKPRTVLVHGGSSSVGTMAIQLLRLLGHVPIATCSPKNFALARRFGAEEVFDYNSPDCAAAIKAYTKNTLSYILDPFTDAKSVDLCYKAMGRAGGRYCCLEMYPEYVLQRKSIKVGFVMGPLLLGHRLALSQGYERDEDPEMRAFGVEWYKDVQKMLDRGLLKRHPIKLLGDSFEALIEGVEMLQRKEVSGEKLVVALDSEQSKPVLTK</sequence>
<accession>A0A4P8W733</accession>
<reference key="1">
    <citation type="journal article" date="2019" name="Org. Lett.">
        <title>Targeted gene inactivations expose silent cytochalasans in Magnaporthe grisea NI980.</title>
        <authorList>
            <person name="Wang C."/>
            <person name="Hantke V."/>
            <person name="Cox R.J."/>
            <person name="Skellam E."/>
        </authorList>
    </citation>
    <scope>NUCLEOTIDE SEQUENCE [GENOMIC DNA]</scope>
    <scope>FUNCTION</scope>
    <scope>DISRUPTION PHENOTYPE</scope>
    <scope>PATHWAY</scope>
    <source>
        <strain>NI980</strain>
    </source>
</reference>
<reference key="2">
    <citation type="journal article" date="2019" name="Org. Lett.">
        <title>Investigating the function of cryptic cytochalasan cytochrome P450 monooxygenases using combinatorial biosynthesis.</title>
        <authorList>
            <person name="Wang C."/>
            <person name="Becker K."/>
            <person name="Pfuetze S."/>
            <person name="Kuhnert E."/>
            <person name="Stadler M."/>
            <person name="Cox R.J."/>
            <person name="Skellam E."/>
        </authorList>
    </citation>
    <scope>FUNCTION</scope>
</reference>
<reference key="3">
    <citation type="journal article" date="2020" name="Chem. Commun. (Camb.)">
        <title>Evidence for enzyme catalysed intramolecular [4+2] Diels-Alder cyclization during the biosynthesis of pyrichalasin H.</title>
        <authorList>
            <person name="Hantke V."/>
            <person name="Skellam E.J."/>
            <person name="Cox R.J."/>
        </authorList>
    </citation>
    <scope>FUNCTION</scope>
</reference>
<keyword id="KW-0521">NADP</keyword>
<keyword id="KW-0547">Nucleotide-binding</keyword>
<keyword id="KW-0560">Oxidoreductase</keyword>
<keyword id="KW-1185">Reference proteome</keyword>
<proteinExistence type="inferred from homology"/>
<name>PYIC_PYRGI</name>